<evidence type="ECO:0000250" key="1"/>
<evidence type="ECO:0000250" key="2">
    <source>
        <dbReference type="UniProtKB" id="Q9ULV4"/>
    </source>
</evidence>
<evidence type="ECO:0000269" key="3">
    <source>
    </source>
</evidence>
<evidence type="ECO:0000269" key="4">
    <source>
    </source>
</evidence>
<evidence type="ECO:0000269" key="5">
    <source>
    </source>
</evidence>
<evidence type="ECO:0000269" key="6">
    <source>
    </source>
</evidence>
<evidence type="ECO:0000269" key="7">
    <source>
    </source>
</evidence>
<evidence type="ECO:0000269" key="8">
    <source>
    </source>
</evidence>
<evidence type="ECO:0000303" key="9">
    <source>
    </source>
</evidence>
<evidence type="ECO:0000305" key="10"/>
<dbReference type="EMBL" id="AF143957">
    <property type="protein sequence ID" value="AAD32705.1"/>
    <property type="molecule type" value="mRNA"/>
</dbReference>
<dbReference type="EMBL" id="AK079327">
    <property type="protein sequence ID" value="BAC37609.1"/>
    <property type="molecule type" value="mRNA"/>
</dbReference>
<dbReference type="EMBL" id="AK082986">
    <property type="protein sequence ID" value="BAC38722.1"/>
    <property type="molecule type" value="mRNA"/>
</dbReference>
<dbReference type="EMBL" id="AK088101">
    <property type="protein sequence ID" value="BAC40144.1"/>
    <property type="molecule type" value="mRNA"/>
</dbReference>
<dbReference type="EMBL" id="AK151017">
    <property type="protein sequence ID" value="BAE30036.1"/>
    <property type="molecule type" value="mRNA"/>
</dbReference>
<dbReference type="EMBL" id="AK151749">
    <property type="protein sequence ID" value="BAE30659.1"/>
    <property type="molecule type" value="mRNA"/>
</dbReference>
<dbReference type="EMBL" id="AK167089">
    <property type="protein sequence ID" value="BAE39246.1"/>
    <property type="molecule type" value="mRNA"/>
</dbReference>
<dbReference type="EMBL" id="AK159506">
    <property type="protein sequence ID" value="BAE35139.1"/>
    <property type="molecule type" value="mRNA"/>
</dbReference>
<dbReference type="EMBL" id="CH466529">
    <property type="protein sequence ID" value="EDL19932.1"/>
    <property type="molecule type" value="Genomic_DNA"/>
</dbReference>
<dbReference type="EMBL" id="BC019444">
    <property type="protein sequence ID" value="AAH19444.1"/>
    <property type="molecule type" value="mRNA"/>
</dbReference>
<dbReference type="EMBL" id="BC085498">
    <property type="protein sequence ID" value="AAH85498.1"/>
    <property type="molecule type" value="mRNA"/>
</dbReference>
<dbReference type="EMBL" id="BC099671">
    <property type="protein sequence ID" value="AAH99671.1"/>
    <property type="molecule type" value="mRNA"/>
</dbReference>
<dbReference type="CCDS" id="CCDS19555.1"/>
<dbReference type="RefSeq" id="NP_035909.2">
    <property type="nucleotide sequence ID" value="NM_011779.3"/>
</dbReference>
<dbReference type="SMR" id="Q9WUM4"/>
<dbReference type="BioGRID" id="204714">
    <property type="interactions" value="170"/>
</dbReference>
<dbReference type="FunCoup" id="Q9WUM4">
    <property type="interactions" value="2506"/>
</dbReference>
<dbReference type="IntAct" id="Q9WUM4">
    <property type="interactions" value="151"/>
</dbReference>
<dbReference type="MINT" id="Q9WUM4"/>
<dbReference type="STRING" id="10090.ENSMUSP00000004646"/>
<dbReference type="GlyGen" id="Q9WUM4">
    <property type="glycosylation" value="1 site, 1 O-linked glycan (1 site)"/>
</dbReference>
<dbReference type="iPTMnet" id="Q9WUM4"/>
<dbReference type="PhosphoSitePlus" id="Q9WUM4"/>
<dbReference type="SwissPalm" id="Q9WUM4"/>
<dbReference type="CPTAC" id="non-CPTAC-3699"/>
<dbReference type="CPTAC" id="non-CPTAC-3780"/>
<dbReference type="jPOST" id="Q9WUM4"/>
<dbReference type="PaxDb" id="10090-ENSMUSP00000004646"/>
<dbReference type="ProteomicsDB" id="277994"/>
<dbReference type="Pumba" id="Q9WUM4"/>
<dbReference type="Antibodypedia" id="30774">
    <property type="antibodies" value="281 antibodies from 32 providers"/>
</dbReference>
<dbReference type="DNASU" id="23790"/>
<dbReference type="Ensembl" id="ENSMUST00000004646.13">
    <property type="protein sequence ID" value="ENSMUSP00000004646.7"/>
    <property type="gene ID" value="ENSMUSG00000004530.13"/>
</dbReference>
<dbReference type="GeneID" id="23790"/>
<dbReference type="KEGG" id="mmu:23790"/>
<dbReference type="UCSC" id="uc008yyu.1">
    <property type="organism name" value="mouse"/>
</dbReference>
<dbReference type="AGR" id="MGI:1345964"/>
<dbReference type="CTD" id="23603"/>
<dbReference type="MGI" id="MGI:1345964">
    <property type="gene designation" value="Coro1c"/>
</dbReference>
<dbReference type="VEuPathDB" id="HostDB:ENSMUSG00000004530"/>
<dbReference type="eggNOG" id="KOG0303">
    <property type="taxonomic scope" value="Eukaryota"/>
</dbReference>
<dbReference type="GeneTree" id="ENSGT00940000156488"/>
<dbReference type="HOGENOM" id="CLU_026859_0_1_1"/>
<dbReference type="InParanoid" id="Q9WUM4"/>
<dbReference type="OMA" id="NFQDDIY"/>
<dbReference type="OrthoDB" id="1850764at2759"/>
<dbReference type="PhylomeDB" id="Q9WUM4"/>
<dbReference type="TreeFam" id="TF314280"/>
<dbReference type="BioGRID-ORCS" id="23790">
    <property type="hits" value="3 hits in 79 CRISPR screens"/>
</dbReference>
<dbReference type="CD-CODE" id="CE726F99">
    <property type="entry name" value="Postsynaptic density"/>
</dbReference>
<dbReference type="ChiTaRS" id="Coro1c">
    <property type="organism name" value="mouse"/>
</dbReference>
<dbReference type="PRO" id="PR:Q9WUM4"/>
<dbReference type="Proteomes" id="UP000000589">
    <property type="component" value="Chromosome 5"/>
</dbReference>
<dbReference type="RNAct" id="Q9WUM4">
    <property type="molecule type" value="protein"/>
</dbReference>
<dbReference type="Bgee" id="ENSMUSG00000004530">
    <property type="expression patterns" value="Expressed in stroma of bone marrow and 258 other cell types or tissues"/>
</dbReference>
<dbReference type="ExpressionAtlas" id="Q9WUM4">
    <property type="expression patterns" value="baseline and differential"/>
</dbReference>
<dbReference type="GO" id="GO:0015629">
    <property type="term" value="C:actin cytoskeleton"/>
    <property type="evidence" value="ECO:0007669"/>
    <property type="project" value="Ensembl"/>
</dbReference>
<dbReference type="GO" id="GO:0005938">
    <property type="term" value="C:cell cortex"/>
    <property type="evidence" value="ECO:0007669"/>
    <property type="project" value="UniProtKB-SubCell"/>
</dbReference>
<dbReference type="GO" id="GO:0005856">
    <property type="term" value="C:cytoskeleton"/>
    <property type="evidence" value="ECO:0000314"/>
    <property type="project" value="UniProtKB"/>
</dbReference>
<dbReference type="GO" id="GO:0010008">
    <property type="term" value="C:endosome membrane"/>
    <property type="evidence" value="ECO:0000250"/>
    <property type="project" value="UniProtKB"/>
</dbReference>
<dbReference type="GO" id="GO:0016600">
    <property type="term" value="C:flotillin complex"/>
    <property type="evidence" value="ECO:0000314"/>
    <property type="project" value="UniProtKB"/>
</dbReference>
<dbReference type="GO" id="GO:0030027">
    <property type="term" value="C:lamellipodium"/>
    <property type="evidence" value="ECO:0007669"/>
    <property type="project" value="UniProtKB-SubCell"/>
</dbReference>
<dbReference type="GO" id="GO:0016328">
    <property type="term" value="C:lateral plasma membrane"/>
    <property type="evidence" value="ECO:0007669"/>
    <property type="project" value="Ensembl"/>
</dbReference>
<dbReference type="GO" id="GO:0032587">
    <property type="term" value="C:ruffle membrane"/>
    <property type="evidence" value="ECO:0007669"/>
    <property type="project" value="UniProtKB-SubCell"/>
</dbReference>
<dbReference type="GO" id="GO:0051015">
    <property type="term" value="F:actin filament binding"/>
    <property type="evidence" value="ECO:0007669"/>
    <property type="project" value="Ensembl"/>
</dbReference>
<dbReference type="GO" id="GO:0031267">
    <property type="term" value="F:small GTPase binding"/>
    <property type="evidence" value="ECO:0000353"/>
    <property type="project" value="UniProtKB"/>
</dbReference>
<dbReference type="GO" id="GO:0000147">
    <property type="term" value="P:actin cortical patch assembly"/>
    <property type="evidence" value="ECO:0000304"/>
    <property type="project" value="MGI"/>
</dbReference>
<dbReference type="GO" id="GO:0030036">
    <property type="term" value="P:actin cytoskeleton organization"/>
    <property type="evidence" value="ECO:0000304"/>
    <property type="project" value="MGI"/>
</dbReference>
<dbReference type="GO" id="GO:0090630">
    <property type="term" value="P:activation of GTPase activity"/>
    <property type="evidence" value="ECO:0000315"/>
    <property type="project" value="UniProtKB"/>
</dbReference>
<dbReference type="GO" id="GO:0022038">
    <property type="term" value="P:corpus callosum development"/>
    <property type="evidence" value="ECO:0000315"/>
    <property type="project" value="MGI"/>
</dbReference>
<dbReference type="GO" id="GO:0016197">
    <property type="term" value="P:endosomal transport"/>
    <property type="evidence" value="ECO:0000250"/>
    <property type="project" value="UniProtKB"/>
</dbReference>
<dbReference type="GO" id="GO:0140285">
    <property type="term" value="P:endosome fission"/>
    <property type="evidence" value="ECO:0000250"/>
    <property type="project" value="UniProtKB"/>
</dbReference>
<dbReference type="GO" id="GO:0097750">
    <property type="term" value="P:endosome membrane tubulation"/>
    <property type="evidence" value="ECO:0000250"/>
    <property type="project" value="UniProtKB"/>
</dbReference>
<dbReference type="GO" id="GO:0045184">
    <property type="term" value="P:establishment of protein localization"/>
    <property type="evidence" value="ECO:0000315"/>
    <property type="project" value="UniProtKB"/>
</dbReference>
<dbReference type="GO" id="GO:0090148">
    <property type="term" value="P:membrane fission"/>
    <property type="evidence" value="ECO:0000250"/>
    <property type="project" value="UniProtKB"/>
</dbReference>
<dbReference type="GO" id="GO:0010633">
    <property type="term" value="P:negative regulation of epithelial cell migration"/>
    <property type="evidence" value="ECO:0007669"/>
    <property type="project" value="Ensembl"/>
</dbReference>
<dbReference type="GO" id="GO:0051895">
    <property type="term" value="P:negative regulation of focal adhesion assembly"/>
    <property type="evidence" value="ECO:0007669"/>
    <property type="project" value="Ensembl"/>
</dbReference>
<dbReference type="GO" id="GO:1900025">
    <property type="term" value="P:negative regulation of substrate adhesion-dependent cell spreading"/>
    <property type="evidence" value="ECO:0007669"/>
    <property type="project" value="Ensembl"/>
</dbReference>
<dbReference type="GO" id="GO:0001755">
    <property type="term" value="P:neural crest cell migration"/>
    <property type="evidence" value="ECO:0007669"/>
    <property type="project" value="Ensembl"/>
</dbReference>
<dbReference type="GO" id="GO:0006909">
    <property type="term" value="P:phagocytosis"/>
    <property type="evidence" value="ECO:0000304"/>
    <property type="project" value="MGI"/>
</dbReference>
<dbReference type="GO" id="GO:2000394">
    <property type="term" value="P:positive regulation of lamellipodium morphogenesis"/>
    <property type="evidence" value="ECO:0007669"/>
    <property type="project" value="Ensembl"/>
</dbReference>
<dbReference type="GO" id="GO:0010762">
    <property type="term" value="P:regulation of fibroblast migration"/>
    <property type="evidence" value="ECO:0000315"/>
    <property type="project" value="UniProtKB"/>
</dbReference>
<dbReference type="GO" id="GO:1900027">
    <property type="term" value="P:regulation of ruffle assembly"/>
    <property type="evidence" value="ECO:0000316"/>
    <property type="project" value="UniProtKB"/>
</dbReference>
<dbReference type="GO" id="GO:0021591">
    <property type="term" value="P:ventricular system development"/>
    <property type="evidence" value="ECO:0000315"/>
    <property type="project" value="MGI"/>
</dbReference>
<dbReference type="FunFam" id="2.130.10.10:FF:000003">
    <property type="entry name" value="Coronin"/>
    <property type="match status" value="1"/>
</dbReference>
<dbReference type="Gene3D" id="2.130.10.10">
    <property type="entry name" value="YVTN repeat-like/Quinoprotein amine dehydrogenase"/>
    <property type="match status" value="1"/>
</dbReference>
<dbReference type="InterPro" id="IPR015505">
    <property type="entry name" value="Coronin"/>
</dbReference>
<dbReference type="InterPro" id="IPR015048">
    <property type="entry name" value="DUF1899"/>
</dbReference>
<dbReference type="InterPro" id="IPR015943">
    <property type="entry name" value="WD40/YVTN_repeat-like_dom_sf"/>
</dbReference>
<dbReference type="InterPro" id="IPR019775">
    <property type="entry name" value="WD40_repeat_CS"/>
</dbReference>
<dbReference type="InterPro" id="IPR036322">
    <property type="entry name" value="WD40_repeat_dom_sf"/>
</dbReference>
<dbReference type="InterPro" id="IPR001680">
    <property type="entry name" value="WD40_rpt"/>
</dbReference>
<dbReference type="PANTHER" id="PTHR10856">
    <property type="entry name" value="CORONIN"/>
    <property type="match status" value="1"/>
</dbReference>
<dbReference type="PANTHER" id="PTHR10856:SF10">
    <property type="entry name" value="CORONIN-1C"/>
    <property type="match status" value="1"/>
</dbReference>
<dbReference type="Pfam" id="PF08953">
    <property type="entry name" value="DUF1899"/>
    <property type="match status" value="1"/>
</dbReference>
<dbReference type="Pfam" id="PF00400">
    <property type="entry name" value="WD40"/>
    <property type="match status" value="3"/>
</dbReference>
<dbReference type="Pfam" id="PF16300">
    <property type="entry name" value="WD40_4"/>
    <property type="match status" value="1"/>
</dbReference>
<dbReference type="SMART" id="SM01166">
    <property type="entry name" value="DUF1899"/>
    <property type="match status" value="1"/>
</dbReference>
<dbReference type="SMART" id="SM01167">
    <property type="entry name" value="DUF1900"/>
    <property type="match status" value="1"/>
</dbReference>
<dbReference type="SMART" id="SM00320">
    <property type="entry name" value="WD40"/>
    <property type="match status" value="3"/>
</dbReference>
<dbReference type="SUPFAM" id="SSF50978">
    <property type="entry name" value="WD40 repeat-like"/>
    <property type="match status" value="1"/>
</dbReference>
<dbReference type="PROSITE" id="PS00678">
    <property type="entry name" value="WD_REPEATS_1"/>
    <property type="match status" value="1"/>
</dbReference>
<dbReference type="PROSITE" id="PS50082">
    <property type="entry name" value="WD_REPEATS_2"/>
    <property type="match status" value="3"/>
</dbReference>
<dbReference type="PROSITE" id="PS50294">
    <property type="entry name" value="WD_REPEATS_REGION"/>
    <property type="match status" value="1"/>
</dbReference>
<keyword id="KW-0007">Acetylation</keyword>
<keyword id="KW-0009">Actin-binding</keyword>
<keyword id="KW-1003">Cell membrane</keyword>
<keyword id="KW-0966">Cell projection</keyword>
<keyword id="KW-0175">Coiled coil</keyword>
<keyword id="KW-0963">Cytoplasm</keyword>
<keyword id="KW-0206">Cytoskeleton</keyword>
<keyword id="KW-0967">Endosome</keyword>
<keyword id="KW-0472">Membrane</keyword>
<keyword id="KW-1185">Reference proteome</keyword>
<keyword id="KW-0677">Repeat</keyword>
<keyword id="KW-0853">WD repeat</keyword>
<gene>
    <name type="primary">Coro1c</name>
</gene>
<protein>
    <recommendedName>
        <fullName>Coronin-1C</fullName>
    </recommendedName>
    <alternativeName>
        <fullName evidence="9">Coronin-3</fullName>
    </alternativeName>
</protein>
<comment type="function">
    <text evidence="2 5 6 7">Plays a role in directed cell migration by regulating the activation and subcellular location of RAC1 (PubMed:25074804, PubMed:25925950). Increases the presence of activated RAC1 at the leading edge of migrating cells (PubMed:25074804, PubMed:25925950). Required for normal organization of the cytoskeleton, including the actin cytoskeleton, microtubules and the vimentin intermediate filaments (PubMed:27178841). Required for normal cell proliferation, cell migration, and normal formation of lamellipodia (PubMed:27178841). Plays a role in endoplasmic reticulum-associated endosome fission: localizes to endosome membrane tubules and promotes recruitment of TMCC1, leading to recruitment of the endoplasmic reticulum to endosome tubules for fission. Endosome membrane fission of early and late endosomes is essential to separate regions destined for lysosomal degradation from carriers to be recycled to the plasma membrane (By similarity). Required for normal distribution of mitochondria within cells (PubMed:27178841).</text>
</comment>
<comment type="subunit">
    <text evidence="2 4 5 7">Homotrimer (By similarity). Binds F-actin (PubMed:22364218). Interacts with RCC2 (PubMed:25074804). Interacts preferentially with nucleotide-free and GDP-bound RAC1 (PubMed:25074804). Interacts with VIM (via head domain) (PubMed:27178841). Interacts with MICAL2; this interaction recruits MICAL2 to the actin filaments (By similarity).</text>
</comment>
<comment type="subcellular location">
    <subcellularLocation>
        <location evidence="3 4 5 6">Cell membrane</location>
        <topology evidence="3 4 5 6">Peripheral membrane protein</topology>
        <orientation evidence="3 4 5 6">Cytoplasmic side</orientation>
    </subcellularLocation>
    <subcellularLocation>
        <location evidence="4 7">Cell projection</location>
        <location evidence="4 7">Lamellipodium</location>
    </subcellularLocation>
    <subcellularLocation>
        <location evidence="5">Cell projection</location>
        <location evidence="5">Ruffle membrane</location>
    </subcellularLocation>
    <subcellularLocation>
        <location evidence="3 4 5 7">Cytoplasm</location>
        <location evidence="3 4 5 7">Cytoskeleton</location>
    </subcellularLocation>
    <subcellularLocation>
        <location evidence="3 4">Cytoplasm</location>
        <location evidence="3 4">Cell cortex</location>
    </subcellularLocation>
    <subcellularLocation>
        <location evidence="2">Endosome membrane</location>
    </subcellularLocation>
    <text evidence="2 3 4 5 7">Colocalizes with the actin cytoskeleton in the cytosol, and especially in the cell cortex (PubMed:19651142, PubMed:22364218, PubMed:25074804, PubMed:27178841). Colocalizes with F-actin at the leading edge of lamellipodia (PubMed:22364218). Partially colocalizes with microtubules and vimentin intermediate filaments (PubMed:27178841). Localizes to endosome membrane tubules/buds (By similarity).</text>
</comment>
<comment type="tissue specificity">
    <text evidence="3 7 8">Detected in skeletal muscle (at protein level) (PubMed:19651142). Detected in fibroblasts (at protein level) (PubMed:27178841). Ubiquitous (PubMed:9778037).</text>
</comment>
<comment type="domain">
    <text evidence="1">The C-terminal coiled-coil domain is essential for cortical membrane localization and oligomerization.</text>
</comment>
<comment type="disruption phenotype">
    <text evidence="7">No visible phenotype (PubMed:27178841). Fibroblasts from mutant mice display a disordered actin cytoskeleton with a reduced width of the actin stress fibers. Likewise, these cells have several microtubule-organizing centers (MTOCs) and a disordered microbutule network (PubMed:27178841).</text>
</comment>
<comment type="similarity">
    <text evidence="10">Belongs to the WD repeat coronin family.</text>
</comment>
<sequence>MRRVVRQSKFRHVFGQAVKNDQCYDDIRVSRVTWDSSFCAVNPRFVAIIIEASGGGAFLVLPLHKTGRIDKSYPTVCGHTGPVLDIDWCPHNDQVIASGSEDCTVMVWQIPENGLTLSLTEPVVILEGHSKRVGIVAWHPTARNVLLSAGCDNAIIIWNVGTGEALINLDDMHSDMIYNVSWSRNGSLICTASKDKKVRVIDPRKQEIVAEKEKAHEGARPMRAIFLADGNVFTTGFSRMSERQLALWNPKNMQEPIALHEMDTSNGVLLPFYDPDTSIIYLCGKGDSSIRYFEITDESPYVHYLNTFSSKEPQRGMGYMPKRGLDVNKCEIARFFKLHERKCEPIIMTVPRKSDLFQDDLYPDTAGPEAALEAEEWFEGKNADPILISLKHGYIPGKNRDLKVVKKNILDSKPAANKKSELSCAPKKPTDTASVQNEAKLDEILKEIKSIKETICSQDERISKLEQQLAKMAA</sequence>
<feature type="chain" id="PRO_0000050927" description="Coronin-1C">
    <location>
        <begin position="1"/>
        <end position="474"/>
    </location>
</feature>
<feature type="repeat" description="WD 1">
    <location>
        <begin position="78"/>
        <end position="118"/>
    </location>
</feature>
<feature type="repeat" description="WD 2">
    <location>
        <begin position="128"/>
        <end position="168"/>
    </location>
</feature>
<feature type="repeat" description="WD 3">
    <location>
        <begin position="172"/>
        <end position="202"/>
    </location>
</feature>
<feature type="repeat" description="WD 4">
    <location>
        <begin position="215"/>
        <end position="249"/>
    </location>
</feature>
<feature type="repeat" description="WD 5">
    <location>
        <begin position="263"/>
        <end position="303"/>
    </location>
</feature>
<feature type="coiled-coil region" evidence="1">
    <location>
        <begin position="435"/>
        <end position="474"/>
    </location>
</feature>
<feature type="modified residue" description="N6-acetyllysine" evidence="2">
    <location>
        <position position="446"/>
    </location>
</feature>
<feature type="mutagenesis site" description="Decreased actin-binding. Loss of actin binding; when associated with 418-E-E-419 and 427-E-E-428." evidence="4">
    <original>R</original>
    <variation>D</variation>
    <location>
        <position position="28"/>
    </location>
</feature>
<feature type="mutagenesis site" description="Decreased actin-binding. Loss of actin binding; when associated with D-28 and 427-E-E-428." evidence="4">
    <original>KK</original>
    <variation>EE</variation>
    <location>
        <begin position="418"/>
        <end position="419"/>
    </location>
</feature>
<feature type="mutagenesis site" description="Decreased actin-binding. Loss of actin binding; when associated with D-28 and 418-E-E-419." evidence="4">
    <original>KK</original>
    <variation>EE</variation>
    <location>
        <begin position="427"/>
        <end position="428"/>
    </location>
</feature>
<feature type="sequence conflict" description="In Ref. 1; AAD32705." evidence="10" ref="1">
    <original>T</original>
    <variation>S</variation>
    <location>
        <position position="66"/>
    </location>
</feature>
<feature type="sequence conflict" description="In Ref. 1; AAD32705." evidence="10" ref="1">
    <original>L</original>
    <variation>F</variation>
    <location>
        <position position="422"/>
    </location>
</feature>
<reference key="1">
    <citation type="journal article" date="1998" name="DNA Cell Biol.">
        <title>Definition of family of coronin-related proteins conserved between humans and mice: close genetic linkage between coronin-2 and CD45-associated protein.</title>
        <authorList>
            <person name="Okumura M."/>
            <person name="Kung C."/>
            <person name="Wong S."/>
            <person name="Rodgers M."/>
            <person name="Thomas M.L."/>
        </authorList>
    </citation>
    <scope>NUCLEOTIDE SEQUENCE [MRNA]</scope>
    <scope>TISSUE SPECIFICITY</scope>
</reference>
<reference key="2">
    <citation type="journal article" date="2005" name="Science">
        <title>The transcriptional landscape of the mammalian genome.</title>
        <authorList>
            <person name="Carninci P."/>
            <person name="Kasukawa T."/>
            <person name="Katayama S."/>
            <person name="Gough J."/>
            <person name="Frith M.C."/>
            <person name="Maeda N."/>
            <person name="Oyama R."/>
            <person name="Ravasi T."/>
            <person name="Lenhard B."/>
            <person name="Wells C."/>
            <person name="Kodzius R."/>
            <person name="Shimokawa K."/>
            <person name="Bajic V.B."/>
            <person name="Brenner S.E."/>
            <person name="Batalov S."/>
            <person name="Forrest A.R."/>
            <person name="Zavolan M."/>
            <person name="Davis M.J."/>
            <person name="Wilming L.G."/>
            <person name="Aidinis V."/>
            <person name="Allen J.E."/>
            <person name="Ambesi-Impiombato A."/>
            <person name="Apweiler R."/>
            <person name="Aturaliya R.N."/>
            <person name="Bailey T.L."/>
            <person name="Bansal M."/>
            <person name="Baxter L."/>
            <person name="Beisel K.W."/>
            <person name="Bersano T."/>
            <person name="Bono H."/>
            <person name="Chalk A.M."/>
            <person name="Chiu K.P."/>
            <person name="Choudhary V."/>
            <person name="Christoffels A."/>
            <person name="Clutterbuck D.R."/>
            <person name="Crowe M.L."/>
            <person name="Dalla E."/>
            <person name="Dalrymple B.P."/>
            <person name="de Bono B."/>
            <person name="Della Gatta G."/>
            <person name="di Bernardo D."/>
            <person name="Down T."/>
            <person name="Engstrom P."/>
            <person name="Fagiolini M."/>
            <person name="Faulkner G."/>
            <person name="Fletcher C.F."/>
            <person name="Fukushima T."/>
            <person name="Furuno M."/>
            <person name="Futaki S."/>
            <person name="Gariboldi M."/>
            <person name="Georgii-Hemming P."/>
            <person name="Gingeras T.R."/>
            <person name="Gojobori T."/>
            <person name="Green R.E."/>
            <person name="Gustincich S."/>
            <person name="Harbers M."/>
            <person name="Hayashi Y."/>
            <person name="Hensch T.K."/>
            <person name="Hirokawa N."/>
            <person name="Hill D."/>
            <person name="Huminiecki L."/>
            <person name="Iacono M."/>
            <person name="Ikeo K."/>
            <person name="Iwama A."/>
            <person name="Ishikawa T."/>
            <person name="Jakt M."/>
            <person name="Kanapin A."/>
            <person name="Katoh M."/>
            <person name="Kawasawa Y."/>
            <person name="Kelso J."/>
            <person name="Kitamura H."/>
            <person name="Kitano H."/>
            <person name="Kollias G."/>
            <person name="Krishnan S.P."/>
            <person name="Kruger A."/>
            <person name="Kummerfeld S.K."/>
            <person name="Kurochkin I.V."/>
            <person name="Lareau L.F."/>
            <person name="Lazarevic D."/>
            <person name="Lipovich L."/>
            <person name="Liu J."/>
            <person name="Liuni S."/>
            <person name="McWilliam S."/>
            <person name="Madan Babu M."/>
            <person name="Madera M."/>
            <person name="Marchionni L."/>
            <person name="Matsuda H."/>
            <person name="Matsuzawa S."/>
            <person name="Miki H."/>
            <person name="Mignone F."/>
            <person name="Miyake S."/>
            <person name="Morris K."/>
            <person name="Mottagui-Tabar S."/>
            <person name="Mulder N."/>
            <person name="Nakano N."/>
            <person name="Nakauchi H."/>
            <person name="Ng P."/>
            <person name="Nilsson R."/>
            <person name="Nishiguchi S."/>
            <person name="Nishikawa S."/>
            <person name="Nori F."/>
            <person name="Ohara O."/>
            <person name="Okazaki Y."/>
            <person name="Orlando V."/>
            <person name="Pang K.C."/>
            <person name="Pavan W.J."/>
            <person name="Pavesi G."/>
            <person name="Pesole G."/>
            <person name="Petrovsky N."/>
            <person name="Piazza S."/>
            <person name="Reed J."/>
            <person name="Reid J.F."/>
            <person name="Ring B.Z."/>
            <person name="Ringwald M."/>
            <person name="Rost B."/>
            <person name="Ruan Y."/>
            <person name="Salzberg S.L."/>
            <person name="Sandelin A."/>
            <person name="Schneider C."/>
            <person name="Schoenbach C."/>
            <person name="Sekiguchi K."/>
            <person name="Semple C.A."/>
            <person name="Seno S."/>
            <person name="Sessa L."/>
            <person name="Sheng Y."/>
            <person name="Shibata Y."/>
            <person name="Shimada H."/>
            <person name="Shimada K."/>
            <person name="Silva D."/>
            <person name="Sinclair B."/>
            <person name="Sperling S."/>
            <person name="Stupka E."/>
            <person name="Sugiura K."/>
            <person name="Sultana R."/>
            <person name="Takenaka Y."/>
            <person name="Taki K."/>
            <person name="Tammoja K."/>
            <person name="Tan S.L."/>
            <person name="Tang S."/>
            <person name="Taylor M.S."/>
            <person name="Tegner J."/>
            <person name="Teichmann S.A."/>
            <person name="Ueda H.R."/>
            <person name="van Nimwegen E."/>
            <person name="Verardo R."/>
            <person name="Wei C.L."/>
            <person name="Yagi K."/>
            <person name="Yamanishi H."/>
            <person name="Zabarovsky E."/>
            <person name="Zhu S."/>
            <person name="Zimmer A."/>
            <person name="Hide W."/>
            <person name="Bult C."/>
            <person name="Grimmond S.M."/>
            <person name="Teasdale R.D."/>
            <person name="Liu E.T."/>
            <person name="Brusic V."/>
            <person name="Quackenbush J."/>
            <person name="Wahlestedt C."/>
            <person name="Mattick J.S."/>
            <person name="Hume D.A."/>
            <person name="Kai C."/>
            <person name="Sasaki D."/>
            <person name="Tomaru Y."/>
            <person name="Fukuda S."/>
            <person name="Kanamori-Katayama M."/>
            <person name="Suzuki M."/>
            <person name="Aoki J."/>
            <person name="Arakawa T."/>
            <person name="Iida J."/>
            <person name="Imamura K."/>
            <person name="Itoh M."/>
            <person name="Kato T."/>
            <person name="Kawaji H."/>
            <person name="Kawagashira N."/>
            <person name="Kawashima T."/>
            <person name="Kojima M."/>
            <person name="Kondo S."/>
            <person name="Konno H."/>
            <person name="Nakano K."/>
            <person name="Ninomiya N."/>
            <person name="Nishio T."/>
            <person name="Okada M."/>
            <person name="Plessy C."/>
            <person name="Shibata K."/>
            <person name="Shiraki T."/>
            <person name="Suzuki S."/>
            <person name="Tagami M."/>
            <person name="Waki K."/>
            <person name="Watahiki A."/>
            <person name="Okamura-Oho Y."/>
            <person name="Suzuki H."/>
            <person name="Kawai J."/>
            <person name="Hayashizaki Y."/>
        </authorList>
    </citation>
    <scope>NUCLEOTIDE SEQUENCE [LARGE SCALE MRNA]</scope>
    <source>
        <strain>C57BL/6J</strain>
        <strain>NOD</strain>
        <tissue>Cerebellum</tissue>
        <tissue>Spinal cord</tissue>
        <tissue>Thymus</tissue>
    </source>
</reference>
<reference key="3">
    <citation type="submission" date="2005-09" db="EMBL/GenBank/DDBJ databases">
        <authorList>
            <person name="Mural R.J."/>
            <person name="Adams M.D."/>
            <person name="Myers E.W."/>
            <person name="Smith H.O."/>
            <person name="Venter J.C."/>
        </authorList>
    </citation>
    <scope>NUCLEOTIDE SEQUENCE [LARGE SCALE GENOMIC DNA]</scope>
</reference>
<reference key="4">
    <citation type="journal article" date="2004" name="Genome Res.">
        <title>The status, quality, and expansion of the NIH full-length cDNA project: the Mammalian Gene Collection (MGC).</title>
        <authorList>
            <consortium name="The MGC Project Team"/>
        </authorList>
    </citation>
    <scope>NUCLEOTIDE SEQUENCE [LARGE SCALE MRNA]</scope>
    <source>
        <strain>C57BL/6J</strain>
        <strain>FVB/N</strain>
        <tissue>Brain</tissue>
        <tissue>Salivary gland</tissue>
    </source>
</reference>
<reference key="5">
    <citation type="journal article" date="2008" name="J. Proteome Res.">
        <title>Large-scale identification and evolution indexing of tyrosine phosphorylation sites from murine brain.</title>
        <authorList>
            <person name="Ballif B.A."/>
            <person name="Carey G.R."/>
            <person name="Sunyaev S.R."/>
            <person name="Gygi S.P."/>
        </authorList>
    </citation>
    <scope>IDENTIFICATION BY MASS SPECTROMETRY [LARGE SCALE ANALYSIS]</scope>
    <source>
        <tissue>Brain</tissue>
    </source>
</reference>
<reference key="6">
    <citation type="journal article" date="2009" name="J. Mol. Biol.">
        <title>Structural and functional diversity of novel coronin 1C (CRN2) isoforms in muscle.</title>
        <authorList>
            <person name="Xavier C.P."/>
            <person name="Rastetter R.H."/>
            <person name="Stumpf M."/>
            <person name="Rosentreter A."/>
            <person name="Muller R."/>
            <person name="Reimann J."/>
            <person name="Cornfine S."/>
            <person name="Linder S."/>
            <person name="van Vliet V."/>
            <person name="Hofmann A."/>
            <person name="Morgan R.O."/>
            <person name="Fernandez M.P."/>
            <person name="Schroder R."/>
            <person name="Noegel A.A."/>
            <person name="Clemen C.S."/>
        </authorList>
    </citation>
    <scope>SUBCELLULAR LOCATION</scope>
    <scope>TISSUE SPECIFICITY</scope>
</reference>
<reference key="7">
    <citation type="journal article" date="2010" name="Cell">
        <title>A tissue-specific atlas of mouse protein phosphorylation and expression.</title>
        <authorList>
            <person name="Huttlin E.L."/>
            <person name="Jedrychowski M.P."/>
            <person name="Elias J.E."/>
            <person name="Goswami T."/>
            <person name="Rad R."/>
            <person name="Beausoleil S.A."/>
            <person name="Villen J."/>
            <person name="Haas W."/>
            <person name="Sowa M.E."/>
            <person name="Gygi S.P."/>
        </authorList>
    </citation>
    <scope>IDENTIFICATION BY MASS SPECTROMETRY [LARGE SCALE ANALYSIS]</scope>
    <source>
        <tissue>Brain</tissue>
        <tissue>Brown adipose tissue</tissue>
        <tissue>Kidney</tissue>
        <tissue>Liver</tissue>
        <tissue>Lung</tissue>
        <tissue>Pancreas</tissue>
        <tissue>Spleen</tissue>
        <tissue>Testis</tissue>
    </source>
</reference>
<reference key="8">
    <citation type="journal article" date="2013" name="Mol. Cell">
        <title>SIRT5-mediated lysine desuccinylation impacts diverse metabolic pathways.</title>
        <authorList>
            <person name="Park J."/>
            <person name="Chen Y."/>
            <person name="Tishkoff D.X."/>
            <person name="Peng C."/>
            <person name="Tan M."/>
            <person name="Dai L."/>
            <person name="Xie Z."/>
            <person name="Zhang Y."/>
            <person name="Zwaans B.M."/>
            <person name="Skinner M.E."/>
            <person name="Lombard D.B."/>
            <person name="Zhao Y."/>
        </authorList>
    </citation>
    <scope>IDENTIFICATION BY MASS SPECTROMETRY [LARGE SCALE ANALYSIS]</scope>
    <source>
        <tissue>Embryonic fibroblast</tissue>
    </source>
</reference>
<reference key="9">
    <citation type="journal article" date="2012" name="Biochem. J.">
        <title>Coronin 1C harbours a second actin-binding site that confers co-operative binding to F-actin.</title>
        <authorList>
            <person name="Chan K.T."/>
            <person name="Roadcap D.W."/>
            <person name="Holoweckyj N."/>
            <person name="Bear J.E."/>
        </authorList>
    </citation>
    <scope>ACTIN BINDING</scope>
    <scope>SUBUNIT</scope>
    <scope>SUBCELLULAR LOCATION</scope>
    <scope>MUTAGENESIS OF ARG-28; 418-LYS-LYS-419 AND 427-LYS-LYS-429</scope>
</reference>
<reference key="10">
    <citation type="journal article" date="2014" name="J. Cell Sci.">
        <title>Coronin-1C and RCC2 guide mesenchymal migration by trafficking Rac1 and controlling GEF exposure.</title>
        <authorList>
            <person name="Williamson R.C."/>
            <person name="Cowell C.A."/>
            <person name="Hammond C.L."/>
            <person name="Bergen D.J."/>
            <person name="Roper J.A."/>
            <person name="Feng Y."/>
            <person name="Rendall T.C."/>
            <person name="Race P.R."/>
            <person name="Bass M.D."/>
        </authorList>
    </citation>
    <scope>FUNCTION</scope>
    <scope>INTERACTION WITH RCC2 AND RAC1</scope>
    <scope>SUBCELLULAR LOCATION</scope>
</reference>
<reference key="11">
    <citation type="journal article" date="2015" name="J. Biol. Chem.">
        <title>Coronin-1C Protein and Caveolin Protein Provide Constitutive and Inducible Mechanisms of Rac1 Protein Trafficking.</title>
        <authorList>
            <person name="Williamson R.C."/>
            <person name="Cowell C.A."/>
            <person name="Reville T."/>
            <person name="Roper J.A."/>
            <person name="Rendall T.C."/>
            <person name="Bass M.D."/>
        </authorList>
    </citation>
    <scope>FUNCTION</scope>
    <scope>SUBCELLULAR LOCATION</scope>
</reference>
<reference key="12">
    <citation type="journal article" date="2016" name="Eur. J. Cell Biol.">
        <title>Coronin 1C-free primary mouse fibroblasts exhibit robust rearrangements in the orientation of actin filaments, microtubules and intermediate filaments.</title>
        <authorList>
            <person name="Behrens J."/>
            <person name="Solga R."/>
            <person name="Ziemann A."/>
            <person name="Rastetter R.H."/>
            <person name="Berwanger C."/>
            <person name="Herrmann H."/>
            <person name="Noegel A.A."/>
            <person name="Clemen C.S."/>
        </authorList>
    </citation>
    <scope>FUNCTION</scope>
    <scope>SUBCELLULAR LOCATION</scope>
    <scope>DISRUPTION PHENOTYPE</scope>
    <scope>TISSUE SPECIFICITY</scope>
    <scope>INTERACTION WITH VIM</scope>
</reference>
<organism>
    <name type="scientific">Mus musculus</name>
    <name type="common">Mouse</name>
    <dbReference type="NCBI Taxonomy" id="10090"/>
    <lineage>
        <taxon>Eukaryota</taxon>
        <taxon>Metazoa</taxon>
        <taxon>Chordata</taxon>
        <taxon>Craniata</taxon>
        <taxon>Vertebrata</taxon>
        <taxon>Euteleostomi</taxon>
        <taxon>Mammalia</taxon>
        <taxon>Eutheria</taxon>
        <taxon>Euarchontoglires</taxon>
        <taxon>Glires</taxon>
        <taxon>Rodentia</taxon>
        <taxon>Myomorpha</taxon>
        <taxon>Muroidea</taxon>
        <taxon>Muridae</taxon>
        <taxon>Murinae</taxon>
        <taxon>Mus</taxon>
        <taxon>Mus</taxon>
    </lineage>
</organism>
<accession>Q9WUM4</accession>
<accession>Q499X7</accession>
<accession>Q8VCQ5</accession>
<proteinExistence type="evidence at protein level"/>
<name>COR1C_MOUSE</name>